<sequence length="642" mass="75086">MPVITITNGLQLTFQKPVSSLEIAKYISSNCEQNCIASYLNNRLVDAVDLIMQDSKLDIITAEDKAGLDILRCSCNHLLGHAIKQLWPEAKMTIGKIIDKGFYYDIDLEHKLQPEDIDALEKCMHTLANKNYNIVKKYVSWQQAREIFQANGEIYKVAILDDNINQHTLVALYYYEEYVDMCRGPHAPNIRFCHHFKLQKTSITYWRNNDKNKKLQRIYGTAWGTDMQLKCYLQSLQEVKKRDHRKIGQQLDLYHIQEEAPGMVFWHVDGWIIFRELETFIRSKLQTYKYQEVKSPVMIDRTLWEQTGHWSNYAEHIFTTSSENREYCIKPMNCPGHVQIFNQQINSYRDLPLRMAEFGSCYRNEPSGSLHGLMRVRNFTQDDAHIFCTEEQVCDEINNNIKMLYEVYHTFGFKKILVNLSTRPAHRIGNDKIWDKAEQDLATTLTNNGILFKYNVGAGAFYGPKIEFTLLDSFDRAWQCGTIQLDFSLPSRLKAFYINKNNQRLVPVMIHRAILGSLERFIGILIEEYAGFFPTWLAPTQVVLMNISDNQSNYVIQLMQKLSTANIRAKIDLRNEKIGFKIREHTLRRVPYMLICGDQEIKMGKVTIRTRYGKNLGMFEMNNFIEKLQHEINHRNLSQIEK</sequence>
<protein>
    <recommendedName>
        <fullName evidence="1">Threonine--tRNA ligase</fullName>
        <ecNumber evidence="1">6.1.1.3</ecNumber>
    </recommendedName>
    <alternativeName>
        <fullName evidence="1">Threonyl-tRNA synthetase</fullName>
        <shortName evidence="1">ThrRS</shortName>
    </alternativeName>
</protein>
<comment type="function">
    <text evidence="1">Catalyzes the attachment of threonine to tRNA(Thr) in a two-step reaction: L-threonine is first activated by ATP to form Thr-AMP and then transferred to the acceptor end of tRNA(Thr). Also edits incorrectly charged L-seryl-tRNA(Thr).</text>
</comment>
<comment type="catalytic activity">
    <reaction evidence="1">
        <text>tRNA(Thr) + L-threonine + ATP = L-threonyl-tRNA(Thr) + AMP + diphosphate + H(+)</text>
        <dbReference type="Rhea" id="RHEA:24624"/>
        <dbReference type="Rhea" id="RHEA-COMP:9670"/>
        <dbReference type="Rhea" id="RHEA-COMP:9704"/>
        <dbReference type="ChEBI" id="CHEBI:15378"/>
        <dbReference type="ChEBI" id="CHEBI:30616"/>
        <dbReference type="ChEBI" id="CHEBI:33019"/>
        <dbReference type="ChEBI" id="CHEBI:57926"/>
        <dbReference type="ChEBI" id="CHEBI:78442"/>
        <dbReference type="ChEBI" id="CHEBI:78534"/>
        <dbReference type="ChEBI" id="CHEBI:456215"/>
        <dbReference type="EC" id="6.1.1.3"/>
    </reaction>
</comment>
<comment type="cofactor">
    <cofactor evidence="1">
        <name>Zn(2+)</name>
        <dbReference type="ChEBI" id="CHEBI:29105"/>
    </cofactor>
    <text evidence="1">Binds 1 zinc ion per subunit.</text>
</comment>
<comment type="subunit">
    <text evidence="1">Homodimer.</text>
</comment>
<comment type="subcellular location">
    <subcellularLocation>
        <location evidence="1">Cytoplasm</location>
    </subcellularLocation>
</comment>
<comment type="similarity">
    <text evidence="1">Belongs to the class-II aminoacyl-tRNA synthetase family.</text>
</comment>
<gene>
    <name evidence="1" type="primary">thrS</name>
    <name type="ordered locus">BCI_0472</name>
</gene>
<reference key="1">
    <citation type="journal article" date="2006" name="PLoS Biol.">
        <title>Metabolic complementarity and genomics of the dual bacterial symbiosis of sharpshooters.</title>
        <authorList>
            <person name="Wu D."/>
            <person name="Daugherty S.C."/>
            <person name="Van Aken S.E."/>
            <person name="Pai G.H."/>
            <person name="Watkins K.L."/>
            <person name="Khouri H."/>
            <person name="Tallon L.J."/>
            <person name="Zaborsky J.M."/>
            <person name="Dunbar H.E."/>
            <person name="Tran P.L."/>
            <person name="Moran N.A."/>
            <person name="Eisen J.A."/>
        </authorList>
    </citation>
    <scope>NUCLEOTIDE SEQUENCE [LARGE SCALE GENOMIC DNA]</scope>
</reference>
<organism>
    <name type="scientific">Baumannia cicadellinicola subsp. Homalodisca coagulata</name>
    <dbReference type="NCBI Taxonomy" id="374463"/>
    <lineage>
        <taxon>Bacteria</taxon>
        <taxon>Pseudomonadati</taxon>
        <taxon>Pseudomonadota</taxon>
        <taxon>Gammaproteobacteria</taxon>
        <taxon>Candidatus Palibaumannia</taxon>
    </lineage>
</organism>
<keyword id="KW-0030">Aminoacyl-tRNA synthetase</keyword>
<keyword id="KW-0067">ATP-binding</keyword>
<keyword id="KW-0963">Cytoplasm</keyword>
<keyword id="KW-0436">Ligase</keyword>
<keyword id="KW-0479">Metal-binding</keyword>
<keyword id="KW-0547">Nucleotide-binding</keyword>
<keyword id="KW-0648">Protein biosynthesis</keyword>
<keyword id="KW-1185">Reference proteome</keyword>
<keyword id="KW-0694">RNA-binding</keyword>
<keyword id="KW-0820">tRNA-binding</keyword>
<keyword id="KW-0862">Zinc</keyword>
<evidence type="ECO:0000255" key="1">
    <source>
        <dbReference type="HAMAP-Rule" id="MF_00184"/>
    </source>
</evidence>
<evidence type="ECO:0000255" key="2">
    <source>
        <dbReference type="PROSITE-ProRule" id="PRU01228"/>
    </source>
</evidence>
<name>SYT_BAUCH</name>
<dbReference type="EC" id="6.1.1.3" evidence="1"/>
<dbReference type="EMBL" id="CP000238">
    <property type="protein sequence ID" value="ABF13851.1"/>
    <property type="molecule type" value="Genomic_DNA"/>
</dbReference>
<dbReference type="RefSeq" id="WP_011520643.1">
    <property type="nucleotide sequence ID" value="NC_007984.1"/>
</dbReference>
<dbReference type="SMR" id="Q1LT04"/>
<dbReference type="STRING" id="374463.BCI_0472"/>
<dbReference type="KEGG" id="bci:BCI_0472"/>
<dbReference type="HOGENOM" id="CLU_008554_0_1_6"/>
<dbReference type="OrthoDB" id="9802304at2"/>
<dbReference type="Proteomes" id="UP000002427">
    <property type="component" value="Chromosome"/>
</dbReference>
<dbReference type="GO" id="GO:0005829">
    <property type="term" value="C:cytosol"/>
    <property type="evidence" value="ECO:0007669"/>
    <property type="project" value="TreeGrafter"/>
</dbReference>
<dbReference type="GO" id="GO:0005524">
    <property type="term" value="F:ATP binding"/>
    <property type="evidence" value="ECO:0007669"/>
    <property type="project" value="UniProtKB-UniRule"/>
</dbReference>
<dbReference type="GO" id="GO:0046872">
    <property type="term" value="F:metal ion binding"/>
    <property type="evidence" value="ECO:0007669"/>
    <property type="project" value="UniProtKB-KW"/>
</dbReference>
<dbReference type="GO" id="GO:0004829">
    <property type="term" value="F:threonine-tRNA ligase activity"/>
    <property type="evidence" value="ECO:0007669"/>
    <property type="project" value="UniProtKB-UniRule"/>
</dbReference>
<dbReference type="GO" id="GO:0000049">
    <property type="term" value="F:tRNA binding"/>
    <property type="evidence" value="ECO:0007669"/>
    <property type="project" value="UniProtKB-KW"/>
</dbReference>
<dbReference type="GO" id="GO:0006435">
    <property type="term" value="P:threonyl-tRNA aminoacylation"/>
    <property type="evidence" value="ECO:0007669"/>
    <property type="project" value="UniProtKB-UniRule"/>
</dbReference>
<dbReference type="CDD" id="cd01667">
    <property type="entry name" value="TGS_ThrRS"/>
    <property type="match status" value="1"/>
</dbReference>
<dbReference type="CDD" id="cd00860">
    <property type="entry name" value="ThrRS_anticodon"/>
    <property type="match status" value="1"/>
</dbReference>
<dbReference type="CDD" id="cd00771">
    <property type="entry name" value="ThrRS_core"/>
    <property type="match status" value="1"/>
</dbReference>
<dbReference type="FunFam" id="3.30.54.20:FF:000002">
    <property type="entry name" value="Threonine--tRNA ligase"/>
    <property type="match status" value="1"/>
</dbReference>
<dbReference type="FunFam" id="3.30.930.10:FF:000002">
    <property type="entry name" value="Threonine--tRNA ligase"/>
    <property type="match status" value="1"/>
</dbReference>
<dbReference type="FunFam" id="3.40.50.800:FF:000001">
    <property type="entry name" value="Threonine--tRNA ligase"/>
    <property type="match status" value="1"/>
</dbReference>
<dbReference type="Gene3D" id="3.10.20.30">
    <property type="match status" value="1"/>
</dbReference>
<dbReference type="Gene3D" id="3.30.54.20">
    <property type="match status" value="1"/>
</dbReference>
<dbReference type="Gene3D" id="3.40.50.800">
    <property type="entry name" value="Anticodon-binding domain"/>
    <property type="match status" value="1"/>
</dbReference>
<dbReference type="Gene3D" id="3.30.930.10">
    <property type="entry name" value="Bira Bifunctional Protein, Domain 2"/>
    <property type="match status" value="1"/>
</dbReference>
<dbReference type="Gene3D" id="3.30.980.10">
    <property type="entry name" value="Threonyl-trna Synthetase, Chain A, domain 2"/>
    <property type="match status" value="1"/>
</dbReference>
<dbReference type="HAMAP" id="MF_00184">
    <property type="entry name" value="Thr_tRNA_synth"/>
    <property type="match status" value="1"/>
</dbReference>
<dbReference type="InterPro" id="IPR002314">
    <property type="entry name" value="aa-tRNA-synt_IIb"/>
</dbReference>
<dbReference type="InterPro" id="IPR006195">
    <property type="entry name" value="aa-tRNA-synth_II"/>
</dbReference>
<dbReference type="InterPro" id="IPR045864">
    <property type="entry name" value="aa-tRNA-synth_II/BPL/LPL"/>
</dbReference>
<dbReference type="InterPro" id="IPR004154">
    <property type="entry name" value="Anticodon-bd"/>
</dbReference>
<dbReference type="InterPro" id="IPR036621">
    <property type="entry name" value="Anticodon-bd_dom_sf"/>
</dbReference>
<dbReference type="InterPro" id="IPR012675">
    <property type="entry name" value="Beta-grasp_dom_sf"/>
</dbReference>
<dbReference type="InterPro" id="IPR004095">
    <property type="entry name" value="TGS"/>
</dbReference>
<dbReference type="InterPro" id="IPR012676">
    <property type="entry name" value="TGS-like"/>
</dbReference>
<dbReference type="InterPro" id="IPR002320">
    <property type="entry name" value="Thr-tRNA-ligase_IIa"/>
</dbReference>
<dbReference type="InterPro" id="IPR018163">
    <property type="entry name" value="Thr/Ala-tRNA-synth_IIc_edit"/>
</dbReference>
<dbReference type="InterPro" id="IPR047246">
    <property type="entry name" value="ThrRS_anticodon"/>
</dbReference>
<dbReference type="InterPro" id="IPR033728">
    <property type="entry name" value="ThrRS_core"/>
</dbReference>
<dbReference type="InterPro" id="IPR012947">
    <property type="entry name" value="tRNA_SAD"/>
</dbReference>
<dbReference type="NCBIfam" id="TIGR00418">
    <property type="entry name" value="thrS"/>
    <property type="match status" value="1"/>
</dbReference>
<dbReference type="PANTHER" id="PTHR11451:SF44">
    <property type="entry name" value="THREONINE--TRNA LIGASE, CHLOROPLASTIC_MITOCHONDRIAL 2"/>
    <property type="match status" value="1"/>
</dbReference>
<dbReference type="PANTHER" id="PTHR11451">
    <property type="entry name" value="THREONINE-TRNA LIGASE"/>
    <property type="match status" value="1"/>
</dbReference>
<dbReference type="Pfam" id="PF03129">
    <property type="entry name" value="HGTP_anticodon"/>
    <property type="match status" value="1"/>
</dbReference>
<dbReference type="Pfam" id="PF00587">
    <property type="entry name" value="tRNA-synt_2b"/>
    <property type="match status" value="1"/>
</dbReference>
<dbReference type="Pfam" id="PF07973">
    <property type="entry name" value="tRNA_SAD"/>
    <property type="match status" value="1"/>
</dbReference>
<dbReference type="PRINTS" id="PR01047">
    <property type="entry name" value="TRNASYNTHTHR"/>
</dbReference>
<dbReference type="SMART" id="SM00863">
    <property type="entry name" value="tRNA_SAD"/>
    <property type="match status" value="1"/>
</dbReference>
<dbReference type="SUPFAM" id="SSF52954">
    <property type="entry name" value="Class II aaRS ABD-related"/>
    <property type="match status" value="1"/>
</dbReference>
<dbReference type="SUPFAM" id="SSF55681">
    <property type="entry name" value="Class II aaRS and biotin synthetases"/>
    <property type="match status" value="1"/>
</dbReference>
<dbReference type="SUPFAM" id="SSF81271">
    <property type="entry name" value="TGS-like"/>
    <property type="match status" value="1"/>
</dbReference>
<dbReference type="SUPFAM" id="SSF55186">
    <property type="entry name" value="ThrRS/AlaRS common domain"/>
    <property type="match status" value="1"/>
</dbReference>
<dbReference type="PROSITE" id="PS50862">
    <property type="entry name" value="AA_TRNA_LIGASE_II"/>
    <property type="match status" value="1"/>
</dbReference>
<dbReference type="PROSITE" id="PS51880">
    <property type="entry name" value="TGS"/>
    <property type="match status" value="1"/>
</dbReference>
<feature type="chain" id="PRO_1000020344" description="Threonine--tRNA ligase">
    <location>
        <begin position="1"/>
        <end position="642"/>
    </location>
</feature>
<feature type="domain" description="TGS" evidence="2">
    <location>
        <begin position="1"/>
        <end position="61"/>
    </location>
</feature>
<feature type="region of interest" description="Catalytic" evidence="1">
    <location>
        <begin position="243"/>
        <end position="534"/>
    </location>
</feature>
<feature type="binding site" evidence="1">
    <location>
        <position position="334"/>
    </location>
    <ligand>
        <name>Zn(2+)</name>
        <dbReference type="ChEBI" id="CHEBI:29105"/>
    </ligand>
</feature>
<feature type="binding site" evidence="1">
    <location>
        <position position="385"/>
    </location>
    <ligand>
        <name>Zn(2+)</name>
        <dbReference type="ChEBI" id="CHEBI:29105"/>
    </ligand>
</feature>
<feature type="binding site" evidence="1">
    <location>
        <position position="511"/>
    </location>
    <ligand>
        <name>Zn(2+)</name>
        <dbReference type="ChEBI" id="CHEBI:29105"/>
    </ligand>
</feature>
<accession>Q1LT04</accession>
<proteinExistence type="inferred from homology"/>